<accession>A4SSA7</accession>
<keyword id="KW-0031">Aminopeptidase</keyword>
<keyword id="KW-0963">Cytoplasm</keyword>
<keyword id="KW-0378">Hydrolase</keyword>
<keyword id="KW-0464">Manganese</keyword>
<keyword id="KW-0479">Metal-binding</keyword>
<keyword id="KW-0645">Protease</keyword>
<dbReference type="EC" id="3.4.11.1" evidence="1"/>
<dbReference type="EC" id="3.4.11.10" evidence="1"/>
<dbReference type="EMBL" id="CP000644">
    <property type="protein sequence ID" value="ABO91779.1"/>
    <property type="molecule type" value="Genomic_DNA"/>
</dbReference>
<dbReference type="RefSeq" id="WP_005315741.1">
    <property type="nucleotide sequence ID" value="NC_009348.1"/>
</dbReference>
<dbReference type="SMR" id="A4SSA7"/>
<dbReference type="STRING" id="29491.GCA_000820065_04182"/>
<dbReference type="MEROPS" id="M17.003"/>
<dbReference type="KEGG" id="asa:ASA_3823"/>
<dbReference type="eggNOG" id="COG0260">
    <property type="taxonomic scope" value="Bacteria"/>
</dbReference>
<dbReference type="HOGENOM" id="CLU_013734_2_2_6"/>
<dbReference type="Proteomes" id="UP000000225">
    <property type="component" value="Chromosome"/>
</dbReference>
<dbReference type="GO" id="GO:0005737">
    <property type="term" value="C:cytoplasm"/>
    <property type="evidence" value="ECO:0007669"/>
    <property type="project" value="UniProtKB-SubCell"/>
</dbReference>
<dbReference type="GO" id="GO:0030145">
    <property type="term" value="F:manganese ion binding"/>
    <property type="evidence" value="ECO:0007669"/>
    <property type="project" value="UniProtKB-UniRule"/>
</dbReference>
<dbReference type="GO" id="GO:0070006">
    <property type="term" value="F:metalloaminopeptidase activity"/>
    <property type="evidence" value="ECO:0007669"/>
    <property type="project" value="InterPro"/>
</dbReference>
<dbReference type="GO" id="GO:0006508">
    <property type="term" value="P:proteolysis"/>
    <property type="evidence" value="ECO:0007669"/>
    <property type="project" value="UniProtKB-KW"/>
</dbReference>
<dbReference type="CDD" id="cd00433">
    <property type="entry name" value="Peptidase_M17"/>
    <property type="match status" value="1"/>
</dbReference>
<dbReference type="FunFam" id="3.40.220.10:FF:000001">
    <property type="entry name" value="Probable cytosol aminopeptidase"/>
    <property type="match status" value="1"/>
</dbReference>
<dbReference type="FunFam" id="3.40.630.10:FF:000004">
    <property type="entry name" value="Probable cytosol aminopeptidase"/>
    <property type="match status" value="1"/>
</dbReference>
<dbReference type="Gene3D" id="3.40.220.10">
    <property type="entry name" value="Leucine Aminopeptidase, subunit E, domain 1"/>
    <property type="match status" value="1"/>
</dbReference>
<dbReference type="Gene3D" id="3.40.630.10">
    <property type="entry name" value="Zn peptidases"/>
    <property type="match status" value="1"/>
</dbReference>
<dbReference type="HAMAP" id="MF_00181">
    <property type="entry name" value="Cytosol_peptidase_M17"/>
    <property type="match status" value="1"/>
</dbReference>
<dbReference type="InterPro" id="IPR011356">
    <property type="entry name" value="Leucine_aapep/pepB"/>
</dbReference>
<dbReference type="InterPro" id="IPR043472">
    <property type="entry name" value="Macro_dom-like"/>
</dbReference>
<dbReference type="InterPro" id="IPR000819">
    <property type="entry name" value="Peptidase_M17_C"/>
</dbReference>
<dbReference type="InterPro" id="IPR023042">
    <property type="entry name" value="Peptidase_M17_leu_NH2_pept"/>
</dbReference>
<dbReference type="InterPro" id="IPR008283">
    <property type="entry name" value="Peptidase_M17_N"/>
</dbReference>
<dbReference type="NCBIfam" id="NF002072">
    <property type="entry name" value="PRK00913.1-1"/>
    <property type="match status" value="1"/>
</dbReference>
<dbReference type="NCBIfam" id="NF002073">
    <property type="entry name" value="PRK00913.1-2"/>
    <property type="match status" value="1"/>
</dbReference>
<dbReference type="NCBIfam" id="NF002074">
    <property type="entry name" value="PRK00913.1-4"/>
    <property type="match status" value="1"/>
</dbReference>
<dbReference type="NCBIfam" id="NF002077">
    <property type="entry name" value="PRK00913.2-4"/>
    <property type="match status" value="1"/>
</dbReference>
<dbReference type="PANTHER" id="PTHR11963:SF23">
    <property type="entry name" value="CYTOSOL AMINOPEPTIDASE"/>
    <property type="match status" value="1"/>
</dbReference>
<dbReference type="PANTHER" id="PTHR11963">
    <property type="entry name" value="LEUCINE AMINOPEPTIDASE-RELATED"/>
    <property type="match status" value="1"/>
</dbReference>
<dbReference type="Pfam" id="PF00883">
    <property type="entry name" value="Peptidase_M17"/>
    <property type="match status" value="1"/>
</dbReference>
<dbReference type="Pfam" id="PF02789">
    <property type="entry name" value="Peptidase_M17_N"/>
    <property type="match status" value="1"/>
</dbReference>
<dbReference type="PRINTS" id="PR00481">
    <property type="entry name" value="LAMNOPPTDASE"/>
</dbReference>
<dbReference type="SUPFAM" id="SSF52949">
    <property type="entry name" value="Macro domain-like"/>
    <property type="match status" value="1"/>
</dbReference>
<dbReference type="SUPFAM" id="SSF53187">
    <property type="entry name" value="Zn-dependent exopeptidases"/>
    <property type="match status" value="1"/>
</dbReference>
<dbReference type="PROSITE" id="PS00631">
    <property type="entry name" value="CYTOSOL_AP"/>
    <property type="match status" value="1"/>
</dbReference>
<organism>
    <name type="scientific">Aeromonas salmonicida (strain A449)</name>
    <dbReference type="NCBI Taxonomy" id="382245"/>
    <lineage>
        <taxon>Bacteria</taxon>
        <taxon>Pseudomonadati</taxon>
        <taxon>Pseudomonadota</taxon>
        <taxon>Gammaproteobacteria</taxon>
        <taxon>Aeromonadales</taxon>
        <taxon>Aeromonadaceae</taxon>
        <taxon>Aeromonas</taxon>
    </lineage>
</organism>
<gene>
    <name evidence="1" type="primary">pepA</name>
    <name type="ordered locus">ASA_3823</name>
</gene>
<evidence type="ECO:0000255" key="1">
    <source>
        <dbReference type="HAMAP-Rule" id="MF_00181"/>
    </source>
</evidence>
<sequence>MEFSVKSGSPEKQRSACVVVGVFEPRRLSPVAEQLDKISDGYISSLLRRGDLEGKPGQMLLLHQVPGVLSERVLLVGCGKERELDERQYKQIINKTITTLNETGSMEAVCFLTELHVKGRDTYWKVRQAVETTKAGLYNFDQFKTNKAEPRRPLRKLVFNVPTRRELTIGEKAIAHGLAVAKGVRVCRDVANMPPNVCNPAYLASQARRLADSFDNITTKVIGEQEMAELGMNSYLAVARGSENEAMMAIIEYKGNADAKPIVLVGKGLTFDSGGISIKPAEGMDEMKYDMGGAASVLGTMHALAQLQLPINVIGVLAGCENMPGGNAYRPGDILTSMSGQTIEVLNTDAEGRLVLCDALTYVDRYDPETVIDVATLTGACIIALGHHTTGLLANHNPLAHELLNASEQAGDRAWRLPLFDEYQEQLESPFADMANIGGRPAGTITAAAFLSRFTKKYNWAHLDIAGTAWKSGKDKGSTGRPVPLLTQFLLNRAGVDIEEKE</sequence>
<proteinExistence type="inferred from homology"/>
<protein>
    <recommendedName>
        <fullName evidence="1">Probable cytosol aminopeptidase</fullName>
        <ecNumber evidence="1">3.4.11.1</ecNumber>
    </recommendedName>
    <alternativeName>
        <fullName evidence="1">Leucine aminopeptidase</fullName>
        <shortName evidence="1">LAP</shortName>
        <ecNumber evidence="1">3.4.11.10</ecNumber>
    </alternativeName>
    <alternativeName>
        <fullName evidence="1">Leucyl aminopeptidase</fullName>
    </alternativeName>
</protein>
<comment type="function">
    <text evidence="1">Presumably involved in the processing and regular turnover of intracellular proteins. Catalyzes the removal of unsubstituted N-terminal amino acids from various peptides.</text>
</comment>
<comment type="catalytic activity">
    <reaction evidence="1">
        <text>Release of an N-terminal amino acid, Xaa-|-Yaa-, in which Xaa is preferably Leu, but may be other amino acids including Pro although not Arg or Lys, and Yaa may be Pro. Amino acid amides and methyl esters are also readily hydrolyzed, but rates on arylamides are exceedingly low.</text>
        <dbReference type="EC" id="3.4.11.1"/>
    </reaction>
</comment>
<comment type="catalytic activity">
    <reaction evidence="1">
        <text>Release of an N-terminal amino acid, preferentially leucine, but not glutamic or aspartic acids.</text>
        <dbReference type="EC" id="3.4.11.10"/>
    </reaction>
</comment>
<comment type="cofactor">
    <cofactor evidence="1">
        <name>Mn(2+)</name>
        <dbReference type="ChEBI" id="CHEBI:29035"/>
    </cofactor>
    <text evidence="1">Binds 2 manganese ions per subunit.</text>
</comment>
<comment type="subcellular location">
    <subcellularLocation>
        <location evidence="1">Cytoplasm</location>
    </subcellularLocation>
</comment>
<comment type="similarity">
    <text evidence="1">Belongs to the peptidase M17 family.</text>
</comment>
<feature type="chain" id="PRO_1000019876" description="Probable cytosol aminopeptidase">
    <location>
        <begin position="1"/>
        <end position="502"/>
    </location>
</feature>
<feature type="active site" evidence="1">
    <location>
        <position position="279"/>
    </location>
</feature>
<feature type="active site" evidence="1">
    <location>
        <position position="353"/>
    </location>
</feature>
<feature type="binding site" evidence="1">
    <location>
        <position position="267"/>
    </location>
    <ligand>
        <name>Mn(2+)</name>
        <dbReference type="ChEBI" id="CHEBI:29035"/>
        <label>2</label>
    </ligand>
</feature>
<feature type="binding site" evidence="1">
    <location>
        <position position="272"/>
    </location>
    <ligand>
        <name>Mn(2+)</name>
        <dbReference type="ChEBI" id="CHEBI:29035"/>
        <label>1</label>
    </ligand>
</feature>
<feature type="binding site" evidence="1">
    <location>
        <position position="272"/>
    </location>
    <ligand>
        <name>Mn(2+)</name>
        <dbReference type="ChEBI" id="CHEBI:29035"/>
        <label>2</label>
    </ligand>
</feature>
<feature type="binding site" evidence="1">
    <location>
        <position position="290"/>
    </location>
    <ligand>
        <name>Mn(2+)</name>
        <dbReference type="ChEBI" id="CHEBI:29035"/>
        <label>2</label>
    </ligand>
</feature>
<feature type="binding site" evidence="1">
    <location>
        <position position="349"/>
    </location>
    <ligand>
        <name>Mn(2+)</name>
        <dbReference type="ChEBI" id="CHEBI:29035"/>
        <label>1</label>
    </ligand>
</feature>
<feature type="binding site" evidence="1">
    <location>
        <position position="351"/>
    </location>
    <ligand>
        <name>Mn(2+)</name>
        <dbReference type="ChEBI" id="CHEBI:29035"/>
        <label>1</label>
    </ligand>
</feature>
<feature type="binding site" evidence="1">
    <location>
        <position position="351"/>
    </location>
    <ligand>
        <name>Mn(2+)</name>
        <dbReference type="ChEBI" id="CHEBI:29035"/>
        <label>2</label>
    </ligand>
</feature>
<name>AMPA_AERS4</name>
<reference key="1">
    <citation type="journal article" date="2008" name="BMC Genomics">
        <title>The genome of Aeromonas salmonicida subsp. salmonicida A449: insights into the evolution of a fish pathogen.</title>
        <authorList>
            <person name="Reith M.E."/>
            <person name="Singh R.K."/>
            <person name="Curtis B."/>
            <person name="Boyd J.M."/>
            <person name="Bouevitch A."/>
            <person name="Kimball J."/>
            <person name="Munholland J."/>
            <person name="Murphy C."/>
            <person name="Sarty D."/>
            <person name="Williams J."/>
            <person name="Nash J.H."/>
            <person name="Johnson S.C."/>
            <person name="Brown L.L."/>
        </authorList>
    </citation>
    <scope>NUCLEOTIDE SEQUENCE [LARGE SCALE GENOMIC DNA]</scope>
    <source>
        <strain>A449</strain>
    </source>
</reference>